<sequence>MASPAMVPLRQLFVDGEWRPPAQGRRLPVVNPTTEAHIGEIPAGTAEDVDAAVAAARAALKRNRGRDWARAPGAVRAKYLRAIAAKVIERKPELAKLEALDCGKPYDEAAWDMDDVAGCFEYFADQAEALDKRQNSPVSLPMETFKCHLRREPIGVVGLITPWNYPLLMATWKIAPALAAGCTAVLKPSELASVTCLELADICKEVGLPSGVLNIVTGLGPDAGAPLSAHPDVDKVAFTGSFETGKKIMASAAPMVKPVTLELGGKSPIVVFDDVDIDKAVEWTLFGCFWTNGQICSATSRLLIHTKIAKKFNERMVAWAKNIKVSDPLEEGCRLGPVVSEGQYEKIKKFISNAKSQGATILTGGVRPAHLEKGFFIEPTIITDITTSMEIWREEVFGPVLCVKEFSTEDEAIELANDTQYGLAGAVISGDRERCQRLSEEIDAGCIWVNCSQPCFCQAPWGGNKRSGFGRELGEGGIDNYLSVKQVTEYISDEPWGWYQSPSKL</sequence>
<dbReference type="EC" id="1.2.1.-" evidence="4 5"/>
<dbReference type="EC" id="1.2.1.47" evidence="4"/>
<dbReference type="EC" id="1.2.1.19" evidence="5"/>
<dbReference type="EC" id="1.2.1.8" evidence="4 5"/>
<dbReference type="EC" id="1.2.1.54" evidence="5"/>
<dbReference type="EMBL" id="GQ184593">
    <property type="protein sequence ID" value="ACS74867.1"/>
    <property type="molecule type" value="mRNA"/>
</dbReference>
<dbReference type="EMBL" id="CM000780">
    <property type="protein sequence ID" value="AQK52374.1"/>
    <property type="molecule type" value="Genomic_DNA"/>
</dbReference>
<dbReference type="EMBL" id="BT064965">
    <property type="protein sequence ID" value="ACN30841.1"/>
    <property type="molecule type" value="mRNA"/>
</dbReference>
<dbReference type="RefSeq" id="NP_001157807.1">
    <property type="nucleotide sequence ID" value="NM_001164335.1"/>
</dbReference>
<dbReference type="PDB" id="4I8P">
    <property type="method" value="X-ray"/>
    <property type="resolution" value="1.95 A"/>
    <property type="chains" value="A/B=2-505"/>
</dbReference>
<dbReference type="PDBsum" id="4I8P"/>
<dbReference type="SMR" id="C0P9J6"/>
<dbReference type="FunCoup" id="C0P9J6">
    <property type="interactions" value="673"/>
</dbReference>
<dbReference type="STRING" id="4577.C0P9J6"/>
<dbReference type="EnsemblPlants" id="Zm00001eb179190_T004">
    <property type="protein sequence ID" value="Zm00001eb179190_P004"/>
    <property type="gene ID" value="Zm00001eb179190"/>
</dbReference>
<dbReference type="GeneID" id="100302679"/>
<dbReference type="Gramene" id="Zm00001eb179190_T004">
    <property type="protein sequence ID" value="Zm00001eb179190_P004"/>
    <property type="gene ID" value="Zm00001eb179190"/>
</dbReference>
<dbReference type="KEGG" id="zma:100302679"/>
<dbReference type="InParanoid" id="C0P9J6"/>
<dbReference type="OMA" id="GQAICEH"/>
<dbReference type="OrthoDB" id="310895at2759"/>
<dbReference type="BRENDA" id="1.2.1.19">
    <property type="organism ID" value="6752"/>
</dbReference>
<dbReference type="UniPathway" id="UPA00529">
    <property type="reaction ID" value="UER00386"/>
</dbReference>
<dbReference type="EvolutionaryTrace" id="C0P9J6"/>
<dbReference type="Proteomes" id="UP000007305">
    <property type="component" value="Chromosome 4"/>
</dbReference>
<dbReference type="ExpressionAtlas" id="C0P9J6">
    <property type="expression patterns" value="baseline and differential"/>
</dbReference>
<dbReference type="GO" id="GO:0047105">
    <property type="term" value="F:4-trimethylammoniobutyraldehyde dehydrogenase activity"/>
    <property type="evidence" value="ECO:0000314"/>
    <property type="project" value="UniProtKB"/>
</dbReference>
<dbReference type="GO" id="GO:0019145">
    <property type="term" value="F:aminobutyraldehyde dehydrogenase (NAD+) activity"/>
    <property type="evidence" value="ECO:0000314"/>
    <property type="project" value="UniProtKB"/>
</dbReference>
<dbReference type="GO" id="GO:0008802">
    <property type="term" value="F:betaine-aldehyde dehydrogenase (NAD+) activity"/>
    <property type="evidence" value="ECO:0000314"/>
    <property type="project" value="UniProtKB"/>
</dbReference>
<dbReference type="GO" id="GO:0047107">
    <property type="term" value="F:gamma-guanidinobutyraldehyde dehydrogenase (NAD+) activity"/>
    <property type="evidence" value="ECO:0000314"/>
    <property type="project" value="UniProtKB"/>
</dbReference>
<dbReference type="GO" id="GO:0000166">
    <property type="term" value="F:nucleotide binding"/>
    <property type="evidence" value="ECO:0007669"/>
    <property type="project" value="UniProtKB-KW"/>
</dbReference>
<dbReference type="GO" id="GO:0042803">
    <property type="term" value="F:protein homodimerization activity"/>
    <property type="evidence" value="ECO:0000314"/>
    <property type="project" value="UniProtKB"/>
</dbReference>
<dbReference type="GO" id="GO:0031402">
    <property type="term" value="F:sodium ion binding"/>
    <property type="evidence" value="ECO:0000314"/>
    <property type="project" value="UniProtKB"/>
</dbReference>
<dbReference type="GO" id="GO:0110095">
    <property type="term" value="P:cellular detoxification of aldehyde"/>
    <property type="evidence" value="ECO:0000314"/>
    <property type="project" value="UniProtKB"/>
</dbReference>
<dbReference type="GO" id="GO:0019285">
    <property type="term" value="P:glycine betaine biosynthetic process from choline"/>
    <property type="evidence" value="ECO:0007669"/>
    <property type="project" value="UniProtKB-UniPathway"/>
</dbReference>
<dbReference type="CDD" id="cd07110">
    <property type="entry name" value="ALDH_F10_BADH"/>
    <property type="match status" value="1"/>
</dbReference>
<dbReference type="FunFam" id="3.40.309.10:FF:000012">
    <property type="entry name" value="Betaine aldehyde dehydrogenase"/>
    <property type="match status" value="1"/>
</dbReference>
<dbReference type="FunFam" id="3.40.605.10:FF:000007">
    <property type="entry name" value="NAD/NADP-dependent betaine aldehyde dehydrogenase"/>
    <property type="match status" value="1"/>
</dbReference>
<dbReference type="Gene3D" id="3.40.605.10">
    <property type="entry name" value="Aldehyde Dehydrogenase, Chain A, domain 1"/>
    <property type="match status" value="1"/>
</dbReference>
<dbReference type="Gene3D" id="3.40.309.10">
    <property type="entry name" value="Aldehyde Dehydrogenase, Chain A, domain 2"/>
    <property type="match status" value="1"/>
</dbReference>
<dbReference type="InterPro" id="IPR016161">
    <property type="entry name" value="Ald_DH/histidinol_DH"/>
</dbReference>
<dbReference type="InterPro" id="IPR016163">
    <property type="entry name" value="Ald_DH_C"/>
</dbReference>
<dbReference type="InterPro" id="IPR016160">
    <property type="entry name" value="Ald_DH_CS_CYS"/>
</dbReference>
<dbReference type="InterPro" id="IPR029510">
    <property type="entry name" value="Ald_DH_CS_GLU"/>
</dbReference>
<dbReference type="InterPro" id="IPR016162">
    <property type="entry name" value="Ald_DH_N"/>
</dbReference>
<dbReference type="InterPro" id="IPR015590">
    <property type="entry name" value="Aldehyde_DH_dom"/>
</dbReference>
<dbReference type="PANTHER" id="PTHR43860">
    <property type="entry name" value="BETAINE ALDEHYDE DEHYDROGENASE"/>
    <property type="match status" value="1"/>
</dbReference>
<dbReference type="PANTHER" id="PTHR43860:SF2">
    <property type="entry name" value="BETAINE ALDEHYDE DEHYDROGENASE-RELATED"/>
    <property type="match status" value="1"/>
</dbReference>
<dbReference type="Pfam" id="PF00171">
    <property type="entry name" value="Aldedh"/>
    <property type="match status" value="1"/>
</dbReference>
<dbReference type="SUPFAM" id="SSF53720">
    <property type="entry name" value="ALDH-like"/>
    <property type="match status" value="1"/>
</dbReference>
<dbReference type="PROSITE" id="PS00070">
    <property type="entry name" value="ALDEHYDE_DEHYDR_CYS"/>
    <property type="match status" value="1"/>
</dbReference>
<dbReference type="PROSITE" id="PS00687">
    <property type="entry name" value="ALDEHYDE_DEHYDR_GLU"/>
    <property type="match status" value="1"/>
</dbReference>
<comment type="function">
    <text evidence="5 8">Dehydrogenase that catalyzes the oxidation of several aminoaldehydes (PubMed:23408433). Metabolizes and detoxifies aldehyde products of polyamine degradation to non-toxic amino acids (Probable). Catalyzes the oxidation of 4-aminobutanal and 3-aminopropanal to 4-aminobutanoate and beta-alanine, respectively (PubMed:23408433). Catalyzes the oxidation of 4-(trimethylamino)butanal and 4-guanidinobutanal to 4-trimethylammoniobutanoate and 4-guanidinobutanoate, respectively (PubMed:23408433). Catalyzes the oxidation of betaine aldehyde to glycine betaine (PubMed:23408433).</text>
</comment>
<comment type="function">
    <text evidence="4">Dehydrogenase that catalyzes the oxidation of several aminoaldehydes (PubMed:21740525). Catalyzes the oxidation of betaine aldehyde to glycine betaine (PubMed:21740525). Catalyzes the oxidation of 4-(trimethylamino)butanal to 4-trimethylammoniobutanoate (PubMed:21740525).</text>
</comment>
<comment type="catalytic activity">
    <reaction evidence="5">
        <text>4-aminobutanal + NAD(+) + H2O = 4-aminobutanoate + NADH + 2 H(+)</text>
        <dbReference type="Rhea" id="RHEA:19105"/>
        <dbReference type="ChEBI" id="CHEBI:15377"/>
        <dbReference type="ChEBI" id="CHEBI:15378"/>
        <dbReference type="ChEBI" id="CHEBI:57540"/>
        <dbReference type="ChEBI" id="CHEBI:57945"/>
        <dbReference type="ChEBI" id="CHEBI:58264"/>
        <dbReference type="ChEBI" id="CHEBI:59888"/>
        <dbReference type="EC" id="1.2.1.19"/>
    </reaction>
    <physiologicalReaction direction="left-to-right" evidence="5">
        <dbReference type="Rhea" id="RHEA:19106"/>
    </physiologicalReaction>
</comment>
<comment type="catalytic activity">
    <reaction evidence="5">
        <text>3-aminopropanal + NAD(+) + H2O = beta-alanine + NADH + 2 H(+)</text>
        <dbReference type="Rhea" id="RHEA:30695"/>
        <dbReference type="ChEBI" id="CHEBI:15377"/>
        <dbReference type="ChEBI" id="CHEBI:15378"/>
        <dbReference type="ChEBI" id="CHEBI:57540"/>
        <dbReference type="ChEBI" id="CHEBI:57945"/>
        <dbReference type="ChEBI" id="CHEBI:57966"/>
        <dbReference type="ChEBI" id="CHEBI:58374"/>
    </reaction>
    <physiologicalReaction direction="left-to-right" evidence="5">
        <dbReference type="Rhea" id="RHEA:30696"/>
    </physiologicalReaction>
</comment>
<comment type="catalytic activity">
    <reaction evidence="4 5">
        <text>4-(trimethylamino)butanal + NAD(+) + H2O = 4-(trimethylamino)butanoate + NADH + 2 H(+)</text>
        <dbReference type="Rhea" id="RHEA:17985"/>
        <dbReference type="ChEBI" id="CHEBI:15377"/>
        <dbReference type="ChEBI" id="CHEBI:15378"/>
        <dbReference type="ChEBI" id="CHEBI:16244"/>
        <dbReference type="ChEBI" id="CHEBI:18020"/>
        <dbReference type="ChEBI" id="CHEBI:57540"/>
        <dbReference type="ChEBI" id="CHEBI:57945"/>
        <dbReference type="EC" id="1.2.1.47"/>
    </reaction>
    <physiologicalReaction direction="left-to-right" evidence="5">
        <dbReference type="Rhea" id="RHEA:17986"/>
    </physiologicalReaction>
</comment>
<comment type="catalytic activity">
    <reaction evidence="5">
        <text>4-guanidinobutanal + NAD(+) + H2O = 4-guanidinobutanoate + NADH + 2 H(+)</text>
        <dbReference type="Rhea" id="RHEA:14381"/>
        <dbReference type="ChEBI" id="CHEBI:15377"/>
        <dbReference type="ChEBI" id="CHEBI:15378"/>
        <dbReference type="ChEBI" id="CHEBI:57486"/>
        <dbReference type="ChEBI" id="CHEBI:57540"/>
        <dbReference type="ChEBI" id="CHEBI:57854"/>
        <dbReference type="ChEBI" id="CHEBI:57945"/>
        <dbReference type="EC" id="1.2.1.54"/>
    </reaction>
    <physiologicalReaction direction="left-to-right" evidence="5">
        <dbReference type="Rhea" id="RHEA:14382"/>
    </physiologicalReaction>
</comment>
<comment type="catalytic activity">
    <reaction evidence="4 5">
        <text>betaine aldehyde + NAD(+) + H2O = glycine betaine + NADH + 2 H(+)</text>
        <dbReference type="Rhea" id="RHEA:15305"/>
        <dbReference type="ChEBI" id="CHEBI:15377"/>
        <dbReference type="ChEBI" id="CHEBI:15378"/>
        <dbReference type="ChEBI" id="CHEBI:15710"/>
        <dbReference type="ChEBI" id="CHEBI:17750"/>
        <dbReference type="ChEBI" id="CHEBI:57540"/>
        <dbReference type="ChEBI" id="CHEBI:57945"/>
        <dbReference type="EC" id="1.2.1.8"/>
    </reaction>
    <physiologicalReaction direction="left-to-right" evidence="4 5">
        <dbReference type="Rhea" id="RHEA:15306"/>
    </physiologicalReaction>
</comment>
<comment type="biophysicochemical properties">
    <kinetics>
        <KM evidence="5">28 uM for 4-aminobutanal</KM>
        <KM evidence="5">9 uM for 3-aminopropanal</KM>
        <KM evidence="5">6 uM for 4-(trimethylamino)butanal</KM>
        <KM evidence="5">3 uM for 4-guanidinobutanal</KM>
        <KM evidence="4 5">14 uM for betaine aldehyde</KM>
        <KM evidence="5">91 uM for NAD(+) with 3-aminopropanal as substrate</KM>
        <Vmax evidence="4">11.0 nmol/sec/mg enzyme with betaine aldehyde as substrate</Vmax>
    </kinetics>
</comment>
<comment type="pathway">
    <text evidence="8">Amine and polyamine biosynthesis; betaine biosynthesis via choline pathway; betaine from betaine aldehyde: step 1/1.</text>
</comment>
<comment type="subunit">
    <text evidence="5">Forms homodimers.</text>
</comment>
<comment type="similarity">
    <text evidence="8">Belongs to the aldehyde dehydrogenase family.</text>
</comment>
<evidence type="ECO:0000250" key="1">
    <source>
        <dbReference type="UniProtKB" id="P20000"/>
    </source>
</evidence>
<evidence type="ECO:0000255" key="2">
    <source>
        <dbReference type="PROSITE-ProRule" id="PRU10007"/>
    </source>
</evidence>
<evidence type="ECO:0000255" key="3">
    <source>
        <dbReference type="PROSITE-ProRule" id="PRU10008"/>
    </source>
</evidence>
<evidence type="ECO:0000269" key="4">
    <source>
    </source>
</evidence>
<evidence type="ECO:0000269" key="5">
    <source>
    </source>
</evidence>
<evidence type="ECO:0000303" key="6">
    <source>
    </source>
</evidence>
<evidence type="ECO:0000303" key="7">
    <source>
    </source>
</evidence>
<evidence type="ECO:0000305" key="8"/>
<evidence type="ECO:0000312" key="9">
    <source>
        <dbReference type="EMBL" id="AQK52374.1"/>
    </source>
</evidence>
<evidence type="ECO:0007744" key="10">
    <source>
        <dbReference type="PDB" id="4I8P"/>
    </source>
</evidence>
<evidence type="ECO:0007829" key="11">
    <source>
        <dbReference type="PDB" id="4I8P"/>
    </source>
</evidence>
<keyword id="KW-0002">3D-structure</keyword>
<keyword id="KW-0479">Metal-binding</keyword>
<keyword id="KW-0520">NAD</keyword>
<keyword id="KW-0547">Nucleotide-binding</keyword>
<keyword id="KW-0560">Oxidoreductase</keyword>
<keyword id="KW-1185">Reference proteome</keyword>
<keyword id="KW-0915">Sodium</keyword>
<name>ADH1A_MAIZE</name>
<reference key="1">
    <citation type="journal article" date="2011" name="FEBS J.">
        <title>Carboxylate and aromatic active-site residues are determinants of high-affinity binding of omega-aminoaldehydes to plant aminoaldehyde dehydrogenases.</title>
        <authorList>
            <person name="Kopecny D."/>
            <person name="Tylichova M."/>
            <person name="Snegaroff J."/>
            <person name="Popelkova H."/>
            <person name="Sebela M."/>
        </authorList>
    </citation>
    <scope>NUCLEOTIDE SEQUENCE [MRNA]</scope>
    <scope>FUNCTION</scope>
    <scope>CATALYTIC ACTIVITY</scope>
    <scope>BIOPHYSICOCHEMICAL PROPERTIES</scope>
</reference>
<reference key="2">
    <citation type="journal article" date="2009" name="Science">
        <title>The B73 maize genome: complexity, diversity, and dynamics.</title>
        <authorList>
            <person name="Schnable P.S."/>
            <person name="Ware D."/>
            <person name="Fulton R.S."/>
            <person name="Stein J.C."/>
            <person name="Wei F."/>
            <person name="Pasternak S."/>
            <person name="Liang C."/>
            <person name="Zhang J."/>
            <person name="Fulton L."/>
            <person name="Graves T.A."/>
            <person name="Minx P."/>
            <person name="Reily A.D."/>
            <person name="Courtney L."/>
            <person name="Kruchowski S.S."/>
            <person name="Tomlinson C."/>
            <person name="Strong C."/>
            <person name="Delehaunty K."/>
            <person name="Fronick C."/>
            <person name="Courtney B."/>
            <person name="Rock S.M."/>
            <person name="Belter E."/>
            <person name="Du F."/>
            <person name="Kim K."/>
            <person name="Abbott R.M."/>
            <person name="Cotton M."/>
            <person name="Levy A."/>
            <person name="Marchetto P."/>
            <person name="Ochoa K."/>
            <person name="Jackson S.M."/>
            <person name="Gillam B."/>
            <person name="Chen W."/>
            <person name="Yan L."/>
            <person name="Higginbotham J."/>
            <person name="Cardenas M."/>
            <person name="Waligorski J."/>
            <person name="Applebaum E."/>
            <person name="Phelps L."/>
            <person name="Falcone J."/>
            <person name="Kanchi K."/>
            <person name="Thane T."/>
            <person name="Scimone A."/>
            <person name="Thane N."/>
            <person name="Henke J."/>
            <person name="Wang T."/>
            <person name="Ruppert J."/>
            <person name="Shah N."/>
            <person name="Rotter K."/>
            <person name="Hodges J."/>
            <person name="Ingenthron E."/>
            <person name="Cordes M."/>
            <person name="Kohlberg S."/>
            <person name="Sgro J."/>
            <person name="Delgado B."/>
            <person name="Mead K."/>
            <person name="Chinwalla A."/>
            <person name="Leonard S."/>
            <person name="Crouse K."/>
            <person name="Collura K."/>
            <person name="Kudrna D."/>
            <person name="Currie J."/>
            <person name="He R."/>
            <person name="Angelova A."/>
            <person name="Rajasekar S."/>
            <person name="Mueller T."/>
            <person name="Lomeli R."/>
            <person name="Scara G."/>
            <person name="Ko A."/>
            <person name="Delaney K."/>
            <person name="Wissotski M."/>
            <person name="Lopez G."/>
            <person name="Campos D."/>
            <person name="Braidotti M."/>
            <person name="Ashley E."/>
            <person name="Golser W."/>
            <person name="Kim H."/>
            <person name="Lee S."/>
            <person name="Lin J."/>
            <person name="Dujmic Z."/>
            <person name="Kim W."/>
            <person name="Talag J."/>
            <person name="Zuccolo A."/>
            <person name="Fan C."/>
            <person name="Sebastian A."/>
            <person name="Kramer M."/>
            <person name="Spiegel L."/>
            <person name="Nascimento L."/>
            <person name="Zutavern T."/>
            <person name="Miller B."/>
            <person name="Ambroise C."/>
            <person name="Muller S."/>
            <person name="Spooner W."/>
            <person name="Narechania A."/>
            <person name="Ren L."/>
            <person name="Wei S."/>
            <person name="Kumari S."/>
            <person name="Faga B."/>
            <person name="Levy M.J."/>
            <person name="McMahan L."/>
            <person name="Van Buren P."/>
            <person name="Vaughn M.W."/>
            <person name="Ying K."/>
            <person name="Yeh C.-T."/>
            <person name="Emrich S.J."/>
            <person name="Jia Y."/>
            <person name="Kalyanaraman A."/>
            <person name="Hsia A.-P."/>
            <person name="Barbazuk W.B."/>
            <person name="Baucom R.S."/>
            <person name="Brutnell T.P."/>
            <person name="Carpita N.C."/>
            <person name="Chaparro C."/>
            <person name="Chia J.-M."/>
            <person name="Deragon J.-M."/>
            <person name="Estill J.C."/>
            <person name="Fu Y."/>
            <person name="Jeddeloh J.A."/>
            <person name="Han Y."/>
            <person name="Lee H."/>
            <person name="Li P."/>
            <person name="Lisch D.R."/>
            <person name="Liu S."/>
            <person name="Liu Z."/>
            <person name="Nagel D.H."/>
            <person name="McCann M.C."/>
            <person name="SanMiguel P."/>
            <person name="Myers A.M."/>
            <person name="Nettleton D."/>
            <person name="Nguyen J."/>
            <person name="Penning B.W."/>
            <person name="Ponnala L."/>
            <person name="Schneider K.L."/>
            <person name="Schwartz D.C."/>
            <person name="Sharma A."/>
            <person name="Soderlund C."/>
            <person name="Springer N.M."/>
            <person name="Sun Q."/>
            <person name="Wang H."/>
            <person name="Waterman M."/>
            <person name="Westerman R."/>
            <person name="Wolfgruber T.K."/>
            <person name="Yang L."/>
            <person name="Yu Y."/>
            <person name="Zhang L."/>
            <person name="Zhou S."/>
            <person name="Zhu Q."/>
            <person name="Bennetzen J.L."/>
            <person name="Dawe R.K."/>
            <person name="Jiang J."/>
            <person name="Jiang N."/>
            <person name="Presting G.G."/>
            <person name="Wessler S.R."/>
            <person name="Aluru S."/>
            <person name="Martienssen R.A."/>
            <person name="Clifton S.W."/>
            <person name="McCombie W.R."/>
            <person name="Wing R.A."/>
            <person name="Wilson R.K."/>
        </authorList>
    </citation>
    <scope>NUCLEOTIDE SEQUENCE [LARGE SCALE GENOMIC DNA]</scope>
    <source>
        <strain>cv. B73</strain>
    </source>
</reference>
<reference key="3">
    <citation type="journal article" date="2009" name="PLoS Genet.">
        <title>Sequencing, mapping, and analysis of 27,455 maize full-length cDNAs.</title>
        <authorList>
            <person name="Soderlund C."/>
            <person name="Descour A."/>
            <person name="Kudrna D."/>
            <person name="Bomhoff M."/>
            <person name="Boyd L."/>
            <person name="Currie J."/>
            <person name="Angelova A."/>
            <person name="Collura K."/>
            <person name="Wissotski M."/>
            <person name="Ashley E."/>
            <person name="Morrow D."/>
            <person name="Fernandes J."/>
            <person name="Walbot V."/>
            <person name="Yu Y."/>
        </authorList>
    </citation>
    <scope>NUCLEOTIDE SEQUENCE [LARGE SCALE MRNA]</scope>
    <source>
        <strain>cv. B73</strain>
    </source>
</reference>
<reference key="4">
    <citation type="journal article" date="2013" name="J. Biol. Chem.">
        <title>Plant ALDH10 family: identifying critical residues for substrate specificity and trapping a thiohemiacetal intermediate.</title>
        <authorList>
            <person name="Kopecny D."/>
            <person name="Koncitikova R."/>
            <person name="Tylichova M."/>
            <person name="Vigouroux A."/>
            <person name="Moskalikova H."/>
            <person name="Soural M."/>
            <person name="Sebela M."/>
            <person name="Morera S."/>
        </authorList>
    </citation>
    <scope>X-RAY CRYSTALLOGRAPHY (1.95 ANGSTROMS) OF 2-505 IN COMPLEX WITH NAD AND SODIUM ION</scope>
    <scope>SUBUNIT</scope>
    <scope>FUNCTION</scope>
    <scope>CATALYTIC ACTIVITY</scope>
    <scope>BIOPHYSICOCHEMICAL PROPERTIES</scope>
</reference>
<accession>C0P9J6</accession>
<organism>
    <name type="scientific">Zea mays</name>
    <name type="common">Maize</name>
    <dbReference type="NCBI Taxonomy" id="4577"/>
    <lineage>
        <taxon>Eukaryota</taxon>
        <taxon>Viridiplantae</taxon>
        <taxon>Streptophyta</taxon>
        <taxon>Embryophyta</taxon>
        <taxon>Tracheophyta</taxon>
        <taxon>Spermatophyta</taxon>
        <taxon>Magnoliopsida</taxon>
        <taxon>Liliopsida</taxon>
        <taxon>Poales</taxon>
        <taxon>Poaceae</taxon>
        <taxon>PACMAD clade</taxon>
        <taxon>Panicoideae</taxon>
        <taxon>Andropogonodae</taxon>
        <taxon>Andropogoneae</taxon>
        <taxon>Tripsacinae</taxon>
        <taxon>Zea</taxon>
    </lineage>
</organism>
<proteinExistence type="evidence at protein level"/>
<protein>
    <recommendedName>
        <fullName evidence="7">Aminoaldehyde dehydrogenase 1a</fullName>
        <shortName evidence="7">ZmAMADH1a</shortName>
        <ecNumber evidence="4 5">1.2.1.-</ecNumber>
    </recommendedName>
    <alternativeName>
        <fullName evidence="8">4-trimethylammoniobutyraldehyde dehydrogenase AMADH1a</fullName>
        <ecNumber evidence="4">1.2.1.47</ecNumber>
    </alternativeName>
    <alternativeName>
        <fullName evidence="8">Aminobutyraldehyde dehydrogenase AMADH1a</fullName>
        <ecNumber evidence="5">1.2.1.19</ecNumber>
    </alternativeName>
    <alternativeName>
        <fullName evidence="8">Betaine aldehyde dehydrogenase AMADH1a</fullName>
        <ecNumber evidence="4 5">1.2.1.8</ecNumber>
    </alternativeName>
    <alternativeName>
        <fullName evidence="8">Gamma-guanidinobutyraldehyde dehydrogenase AMADH1a</fullName>
        <ecNumber evidence="5">1.2.1.54</ecNumber>
    </alternativeName>
</protein>
<gene>
    <name evidence="6" type="primary">AMADH1A</name>
    <name evidence="7" type="synonym">ALDH10A8</name>
    <name evidence="9" type="ORF">ZEAMMB73_Zm00001d050339</name>
</gene>
<feature type="chain" id="PRO_0000454135" description="Aminoaldehyde dehydrogenase 1a">
    <location>
        <begin position="1"/>
        <end position="505"/>
    </location>
</feature>
<feature type="active site" description="Proton acceptor" evidence="2">
    <location>
        <position position="262"/>
    </location>
</feature>
<feature type="active site" description="Nucleophile" evidence="3">
    <location>
        <position position="296"/>
    </location>
</feature>
<feature type="binding site" evidence="5 10">
    <location>
        <position position="101"/>
    </location>
    <ligand>
        <name>Na(+)</name>
        <dbReference type="ChEBI" id="CHEBI:29101"/>
    </ligand>
</feature>
<feature type="binding site" evidence="5 10">
    <location>
        <begin position="161"/>
        <end position="163"/>
    </location>
    <ligand>
        <name>NAD(+)</name>
        <dbReference type="ChEBI" id="CHEBI:57540"/>
    </ligand>
</feature>
<feature type="binding site" evidence="5 10">
    <location>
        <begin position="187"/>
        <end position="190"/>
    </location>
    <ligand>
        <name>NAD(+)</name>
        <dbReference type="ChEBI" id="CHEBI:57540"/>
    </ligand>
</feature>
<feature type="binding site" evidence="5 10">
    <location>
        <position position="191"/>
    </location>
    <ligand>
        <name>Na(+)</name>
        <dbReference type="ChEBI" id="CHEBI:29101"/>
    </ligand>
</feature>
<feature type="binding site" evidence="5 10">
    <location>
        <begin position="241"/>
        <end position="244"/>
    </location>
    <ligand>
        <name>NAD(+)</name>
        <dbReference type="ChEBI" id="CHEBI:57540"/>
    </ligand>
</feature>
<feature type="binding site" evidence="5 10">
    <location>
        <position position="262"/>
    </location>
    <ligand>
        <name>NAD(+)</name>
        <dbReference type="ChEBI" id="CHEBI:57540"/>
    </ligand>
</feature>
<feature type="binding site" evidence="5 10">
    <location>
        <position position="395"/>
    </location>
    <ligand>
        <name>NAD(+)</name>
        <dbReference type="ChEBI" id="CHEBI:57540"/>
    </ligand>
</feature>
<feature type="binding site" evidence="5 10">
    <location>
        <position position="461"/>
    </location>
    <ligand>
        <name>NAD(+)</name>
        <dbReference type="ChEBI" id="CHEBI:57540"/>
    </ligand>
</feature>
<feature type="site" description="Transition state stabilizer" evidence="1">
    <location>
        <position position="164"/>
    </location>
</feature>
<feature type="strand" evidence="11">
    <location>
        <begin position="12"/>
        <end position="14"/>
    </location>
</feature>
<feature type="strand" evidence="11">
    <location>
        <begin position="17"/>
        <end position="19"/>
    </location>
</feature>
<feature type="strand" evidence="11">
    <location>
        <begin position="26"/>
        <end position="30"/>
    </location>
</feature>
<feature type="turn" evidence="11">
    <location>
        <begin position="32"/>
        <end position="34"/>
    </location>
</feature>
<feature type="strand" evidence="11">
    <location>
        <begin position="37"/>
        <end position="42"/>
    </location>
</feature>
<feature type="helix" evidence="11">
    <location>
        <begin position="46"/>
        <end position="61"/>
    </location>
</feature>
<feature type="helix" evidence="11">
    <location>
        <begin position="62"/>
        <end position="65"/>
    </location>
</feature>
<feature type="turn" evidence="11">
    <location>
        <begin position="66"/>
        <end position="70"/>
    </location>
</feature>
<feature type="helix" evidence="11">
    <location>
        <begin position="73"/>
        <end position="89"/>
    </location>
</feature>
<feature type="helix" evidence="11">
    <location>
        <begin position="91"/>
        <end position="102"/>
    </location>
</feature>
<feature type="helix" evidence="11">
    <location>
        <begin position="106"/>
        <end position="133"/>
    </location>
</feature>
<feature type="strand" evidence="11">
    <location>
        <begin position="145"/>
        <end position="153"/>
    </location>
</feature>
<feature type="strand" evidence="11">
    <location>
        <begin position="156"/>
        <end position="160"/>
    </location>
</feature>
<feature type="strand" evidence="11">
    <location>
        <begin position="163"/>
        <end position="165"/>
    </location>
</feature>
<feature type="helix" evidence="11">
    <location>
        <begin position="166"/>
        <end position="179"/>
    </location>
</feature>
<feature type="strand" evidence="11">
    <location>
        <begin position="183"/>
        <end position="187"/>
    </location>
</feature>
<feature type="helix" evidence="11">
    <location>
        <begin position="194"/>
        <end position="205"/>
    </location>
</feature>
<feature type="strand" evidence="11">
    <location>
        <begin position="212"/>
        <end position="215"/>
    </location>
</feature>
<feature type="turn" evidence="11">
    <location>
        <begin position="220"/>
        <end position="223"/>
    </location>
</feature>
<feature type="helix" evidence="11">
    <location>
        <begin position="224"/>
        <end position="228"/>
    </location>
</feature>
<feature type="strand" evidence="11">
    <location>
        <begin position="234"/>
        <end position="240"/>
    </location>
</feature>
<feature type="helix" evidence="11">
    <location>
        <begin position="242"/>
        <end position="252"/>
    </location>
</feature>
<feature type="helix" evidence="11">
    <location>
        <begin position="253"/>
        <end position="255"/>
    </location>
</feature>
<feature type="strand" evidence="11">
    <location>
        <begin position="259"/>
        <end position="262"/>
    </location>
</feature>
<feature type="strand" evidence="11">
    <location>
        <begin position="268"/>
        <end position="271"/>
    </location>
</feature>
<feature type="strand" evidence="11">
    <location>
        <begin position="273"/>
        <end position="275"/>
    </location>
</feature>
<feature type="helix" evidence="11">
    <location>
        <begin position="277"/>
        <end position="289"/>
    </location>
</feature>
<feature type="helix" evidence="11">
    <location>
        <begin position="290"/>
        <end position="293"/>
    </location>
</feature>
<feature type="strand" evidence="11">
    <location>
        <begin position="301"/>
        <end position="305"/>
    </location>
</feature>
<feature type="turn" evidence="11">
    <location>
        <begin position="306"/>
        <end position="308"/>
    </location>
</feature>
<feature type="helix" evidence="11">
    <location>
        <begin position="309"/>
        <end position="321"/>
    </location>
</feature>
<feature type="helix" evidence="11">
    <location>
        <begin position="341"/>
        <end position="356"/>
    </location>
</feature>
<feature type="strand" evidence="11">
    <location>
        <begin position="360"/>
        <end position="363"/>
    </location>
</feature>
<feature type="strand" evidence="11">
    <location>
        <begin position="373"/>
        <end position="375"/>
    </location>
</feature>
<feature type="strand" evidence="11">
    <location>
        <begin position="380"/>
        <end position="384"/>
    </location>
</feature>
<feature type="helix" evidence="11">
    <location>
        <begin position="390"/>
        <end position="393"/>
    </location>
</feature>
<feature type="strand" evidence="11">
    <location>
        <begin position="398"/>
        <end position="408"/>
    </location>
</feature>
<feature type="helix" evidence="11">
    <location>
        <begin position="409"/>
        <end position="417"/>
    </location>
</feature>
<feature type="strand" evidence="11">
    <location>
        <begin position="423"/>
        <end position="428"/>
    </location>
</feature>
<feature type="helix" evidence="11">
    <location>
        <begin position="432"/>
        <end position="441"/>
    </location>
</feature>
<feature type="strand" evidence="11">
    <location>
        <begin position="444"/>
        <end position="452"/>
    </location>
</feature>
<feature type="helix" evidence="11">
    <location>
        <begin position="465"/>
        <end position="467"/>
    </location>
</feature>
<feature type="strand" evidence="11">
    <location>
        <begin position="472"/>
        <end position="474"/>
    </location>
</feature>
<feature type="helix" evidence="11">
    <location>
        <begin position="477"/>
        <end position="481"/>
    </location>
</feature>
<feature type="strand" evidence="11">
    <location>
        <begin position="482"/>
        <end position="490"/>
    </location>
</feature>